<organism>
    <name type="scientific">Influenza B virus (strain B/Hong Kong/8/1973)</name>
    <dbReference type="NCBI Taxonomy" id="427826"/>
    <lineage>
        <taxon>Viruses</taxon>
        <taxon>Riboviria</taxon>
        <taxon>Orthornavirae</taxon>
        <taxon>Negarnaviricota</taxon>
        <taxon>Polyploviricotina</taxon>
        <taxon>Insthoviricetes</taxon>
        <taxon>Articulavirales</taxon>
        <taxon>Orthomyxoviridae</taxon>
        <taxon>Betainfluenzavirus</taxon>
        <taxon>Betainfluenzavirus influenzae</taxon>
        <taxon>Influenza B virus</taxon>
    </lineage>
</organism>
<protein>
    <recommendedName>
        <fullName evidence="1">Non-structural protein 1</fullName>
        <shortName evidence="1">NS1</shortName>
    </recommendedName>
    <alternativeName>
        <fullName evidence="1">NS1A</fullName>
    </alternativeName>
</protein>
<keyword id="KW-0025">Alternative splicing</keyword>
<keyword id="KW-1035">Host cytoplasm</keyword>
<keyword id="KW-1048">Host nucleus</keyword>
<keyword id="KW-0945">Host-virus interaction</keyword>
<keyword id="KW-1090">Inhibition of host innate immune response by virus</keyword>
<keyword id="KW-1114">Inhibition of host interferon signaling pathway by virus</keyword>
<keyword id="KW-1095">Inhibition of host ISG15 by virus</keyword>
<keyword id="KW-1102">Inhibition of host PKR by virus</keyword>
<keyword id="KW-0922">Interferon antiviral system evasion</keyword>
<keyword id="KW-0694">RNA-binding</keyword>
<keyword id="KW-0899">Viral immunoevasion</keyword>
<feature type="chain" id="PRO_0000078963" description="Non-structural protein 1">
    <location>
        <begin position="1"/>
        <end position="281"/>
    </location>
</feature>
<feature type="region of interest" description="G1P2-binding">
    <location>
        <begin position="1"/>
        <end position="103"/>
    </location>
</feature>
<feature type="region of interest" description="RNA-binding and homodimerization" evidence="1">
    <location>
        <begin position="1"/>
        <end position="93"/>
    </location>
</feature>
<feature type="short sequence motif" description="Nuclear localization signal" evidence="1">
    <location>
        <begin position="50"/>
        <end position="55"/>
    </location>
</feature>
<sequence>MADNMTTTQIEVGPGATNATINFEAGILECYERLSWQRALDYPGQDRLNRLKRKLESRIKTHNKSEPESKRMSLEERKAIGVKMMKVLLFMNPSAGIEGFEPYCMKNPSNSNCPNCNWADYPPTPGKCLDDIEEEPENVDDPTEIVLRDMNNKDARQKIKEEVNTQKEGKFRLTIKRDIRNVLSLRVLVNGTFLKHPNGYKTLSTLHRLNAYDQSGRLVAKLVATDDLTVEDEEDGHRILNSLFERFNEGHSKPIRAAETAVGVLSQFGQEHRLSPEEGDN</sequence>
<reference key="1">
    <citation type="journal article" date="1988" name="Virology">
        <title>Influenza B virus evolution: co-circulating lineages and comparison of evolutionary pattern with those of influenza A and C viruses.</title>
        <authorList>
            <person name="Yamashita M."/>
            <person name="Krystal M."/>
            <person name="Fitch W.M."/>
            <person name="Palese P."/>
        </authorList>
    </citation>
    <scope>NUCLEOTIDE SEQUENCE [GENOMIC RNA]</scope>
</reference>
<reference key="2">
    <citation type="journal article" date="2003" name="Virology">
        <title>Intracellular warfare between human influenza viruses and human cells: the roles of the viral NS1 protein.</title>
        <authorList>
            <person name="Krug R.M."/>
            <person name="Yuan W."/>
            <person name="Noah D.L."/>
            <person name="Latham A.G."/>
        </authorList>
    </citation>
    <scope>REVIEW</scope>
</reference>
<organismHost>
    <name type="scientific">Homo sapiens</name>
    <name type="common">Human</name>
    <dbReference type="NCBI Taxonomy" id="9606"/>
</organismHost>
<accession>P69255</accession>
<accession>P12594</accession>
<name>NS1_INBHK</name>
<gene>
    <name evidence="1" type="primary">NS</name>
</gene>
<evidence type="ECO:0000255" key="1">
    <source>
        <dbReference type="HAMAP-Rule" id="MF_04066"/>
    </source>
</evidence>
<dbReference type="EMBL" id="M19792">
    <property type="protein sequence ID" value="AAA43720.1"/>
    <property type="molecule type" value="Genomic_RNA"/>
</dbReference>
<dbReference type="SMR" id="P69255"/>
<dbReference type="GO" id="GO:0030430">
    <property type="term" value="C:host cell cytoplasm"/>
    <property type="evidence" value="ECO:0007669"/>
    <property type="project" value="UniProtKB-SubCell"/>
</dbReference>
<dbReference type="GO" id="GO:0042025">
    <property type="term" value="C:host cell nucleus"/>
    <property type="evidence" value="ECO:0007669"/>
    <property type="project" value="UniProtKB-SubCell"/>
</dbReference>
<dbReference type="GO" id="GO:0030291">
    <property type="term" value="F:protein serine/threonine kinase inhibitor activity"/>
    <property type="evidence" value="ECO:0007669"/>
    <property type="project" value="UniProtKB-KW"/>
</dbReference>
<dbReference type="GO" id="GO:0003723">
    <property type="term" value="F:RNA binding"/>
    <property type="evidence" value="ECO:0007669"/>
    <property type="project" value="UniProtKB-KW"/>
</dbReference>
<dbReference type="GO" id="GO:0039579">
    <property type="term" value="P:symbiont-mediated suppression of host ISG15-protein conjugation"/>
    <property type="evidence" value="ECO:0007669"/>
    <property type="project" value="UniProtKB-KW"/>
</dbReference>
<dbReference type="GO" id="GO:0039580">
    <property type="term" value="P:symbiont-mediated suppression of host PKR/eIFalpha signaling"/>
    <property type="evidence" value="ECO:0007669"/>
    <property type="project" value="UniProtKB-KW"/>
</dbReference>
<dbReference type="GO" id="GO:0039502">
    <property type="term" value="P:symbiont-mediated suppression of host type I interferon-mediated signaling pathway"/>
    <property type="evidence" value="ECO:0007669"/>
    <property type="project" value="UniProtKB-KW"/>
</dbReference>
<dbReference type="Gene3D" id="1.10.287.10">
    <property type="entry name" value="S15/NS1, RNA-binding"/>
    <property type="match status" value="1"/>
</dbReference>
<dbReference type="HAMAP" id="MF_04066">
    <property type="entry name" value="INFV_NS1"/>
    <property type="match status" value="1"/>
</dbReference>
<dbReference type="InterPro" id="IPR004208">
    <property type="entry name" value="NS1"/>
</dbReference>
<dbReference type="InterPro" id="IPR009068">
    <property type="entry name" value="uS15_NS1_RNA-bd_sf"/>
</dbReference>
<dbReference type="Pfam" id="PF02942">
    <property type="entry name" value="Flu_B_NS1"/>
    <property type="match status" value="1"/>
</dbReference>
<dbReference type="PIRSF" id="PIRSF003938">
    <property type="entry name" value="Flu_B_NS1"/>
    <property type="match status" value="1"/>
</dbReference>
<dbReference type="SUPFAM" id="SSF47060">
    <property type="entry name" value="S15/NS1 RNA-binding domain"/>
    <property type="match status" value="1"/>
</dbReference>
<proteinExistence type="inferred from homology"/>
<comment type="function">
    <text evidence="1">Binds and inhibits the conjugation of the ubiquitin-like G1P2/ISG15 protein to its target proteins. Since G1P2/ISG15 is an early antiviral protein, NS1 may inhibit the host antiviral response. Prevents EIF2AK2/PKR activation, either by binding double strand RNA or by interacting directly with EIF2AK2/PKR. Also binds poly(A) and U6 snRNA.</text>
</comment>
<comment type="subunit">
    <text evidence="1">Homodimer. Interacts with and inhibits human G1P2 conjugation by UBE1L.</text>
</comment>
<comment type="subcellular location">
    <subcellularLocation>
        <location evidence="1">Host cytoplasm</location>
    </subcellularLocation>
    <subcellularLocation>
        <location evidence="1">Host nucleus</location>
    </subcellularLocation>
</comment>
<comment type="alternative products">
    <event type="alternative splicing"/>
    <isoform>
        <id>P69255-1</id>
        <name>NS1</name>
        <sequence type="displayed"/>
    </isoform>
    <isoform>
        <id>P69255-2</id>
        <name>NEP</name>
        <name>NS2</name>
        <sequence type="not described"/>
    </isoform>
</comment>
<comment type="similarity">
    <text evidence="1">Belongs to the influenza B viruses NS1 family.</text>
</comment>